<comment type="alternative products">
    <event type="alternative splicing"/>
    <event type="alternative initiation"/>
    <isoform>
        <id>P24850-1</id>
        <name>Agno</name>
        <sequence type="displayed"/>
    </isoform>
    <isoform>
        <id>P24849-1</id>
        <name>VP2</name>
        <name>Minor capsid protein VP2</name>
        <sequence type="external"/>
    </isoform>
    <isoform>
        <id>P24849-2</id>
        <name>VP3</name>
        <name>Minor capsid protein VP3</name>
        <sequence type="external"/>
    </isoform>
    <isoform>
        <id>P24848-1</id>
        <name>VP1</name>
        <sequence type="external"/>
    </isoform>
</comment>
<comment type="miscellaneous">
    <molecule>Isoform Agno</molecule>
    <text>Produced by alternative initiation of the late mRNA.</text>
</comment>
<comment type="caution">
    <text evidence="1">Encoded by the same late mRNA leader region, but is very different from primate polyomavirus agnoproteins.</text>
</comment>
<proteinExistence type="predicted"/>
<protein>
    <recommendedName>
        <fullName>Bovine agnoprotein</fullName>
    </recommendedName>
    <alternativeName>
        <fullName>Agno</fullName>
    </alternativeName>
</protein>
<organismHost>
    <name type="scientific">Bos taurus</name>
    <name type="common">Bovine</name>
    <dbReference type="NCBI Taxonomy" id="9913"/>
</organismHost>
<organism>
    <name type="scientific">Bovine polyomavirus</name>
    <name type="common">BPyV</name>
    <name type="synonym">Bos taurus polyomavirus 1</name>
    <dbReference type="NCBI Taxonomy" id="1891754"/>
    <lineage>
        <taxon>Viruses</taxon>
        <taxon>Monodnaviria</taxon>
        <taxon>Shotokuvirae</taxon>
        <taxon>Cossaviricota</taxon>
        <taxon>Papovaviricetes</taxon>
        <taxon>Sepolyvirales</taxon>
        <taxon>Polyomaviridae</taxon>
        <taxon>Epsilonpolyomavirus</taxon>
    </lineage>
</organism>
<evidence type="ECO:0000305" key="1"/>
<keyword id="KW-0024">Alternative initiation</keyword>
<keyword id="KW-0025">Alternative splicing</keyword>
<keyword id="KW-1185">Reference proteome</keyword>
<sequence>MALQWVWLCLRKSLRNNKLMMCRILIELLKILLDVLDSGDYADGPSDNPGTGIAKEEIVKCIDFLKMLEAGDDDIDKYGFPELLAAHFANCLAVCLKAARESDAMFCCSLEANSSDFN</sequence>
<reference key="1">
    <citation type="journal article" date="1990" name="J. Gen. Virol.">
        <title>The complete nucleotide sequence of bovine polyomavirus.</title>
        <authorList>
            <person name="Schuurman R."/>
            <person name="Sol C."/>
            <person name="van der Noordaa J."/>
        </authorList>
    </citation>
    <scope>NUCLEOTIDE SEQUENCE [GENOMIC DNA]</scope>
</reference>
<name>AGNO_POVBO</name>
<accession>P24850</accession>
<dbReference type="EMBL" id="D13942">
    <property type="protein sequence ID" value="BAA03036.1"/>
    <property type="molecule type" value="Genomic_DNA"/>
</dbReference>
<dbReference type="PIR" id="JU0361">
    <property type="entry name" value="DNVPBP"/>
</dbReference>
<dbReference type="RefSeq" id="NP_040784.1">
    <molecule id="P24850-1"/>
    <property type="nucleotide sequence ID" value="NC_001442.1"/>
</dbReference>
<dbReference type="GeneID" id="29031006"/>
<dbReference type="KEGG" id="vg:29031006"/>
<dbReference type="Proteomes" id="UP000008476">
    <property type="component" value="Genome"/>
</dbReference>
<feature type="chain" id="PRO_0000115032" description="Bovine agnoprotein">
    <location>
        <begin position="1"/>
        <end position="118"/>
    </location>
</feature>